<name>ENO_CHLT2</name>
<accession>B0B8G1</accession>
<gene>
    <name evidence="1" type="primary">eno</name>
    <name type="ordered locus">CTL0850</name>
</gene>
<evidence type="ECO:0000255" key="1">
    <source>
        <dbReference type="HAMAP-Rule" id="MF_00318"/>
    </source>
</evidence>
<keyword id="KW-0963">Cytoplasm</keyword>
<keyword id="KW-0324">Glycolysis</keyword>
<keyword id="KW-0456">Lyase</keyword>
<keyword id="KW-0460">Magnesium</keyword>
<keyword id="KW-0479">Metal-binding</keyword>
<keyword id="KW-0964">Secreted</keyword>
<feature type="chain" id="PRO_1000115846" description="Enolase">
    <location>
        <begin position="1"/>
        <end position="424"/>
    </location>
</feature>
<feature type="active site" description="Proton donor" evidence="1">
    <location>
        <position position="207"/>
    </location>
</feature>
<feature type="active site" description="Proton acceptor" evidence="1">
    <location>
        <position position="335"/>
    </location>
</feature>
<feature type="binding site" evidence="1">
    <location>
        <position position="165"/>
    </location>
    <ligand>
        <name>(2R)-2-phosphoglycerate</name>
        <dbReference type="ChEBI" id="CHEBI:58289"/>
    </ligand>
</feature>
<feature type="binding site" evidence="1">
    <location>
        <position position="244"/>
    </location>
    <ligand>
        <name>Mg(2+)</name>
        <dbReference type="ChEBI" id="CHEBI:18420"/>
    </ligand>
</feature>
<feature type="binding site" evidence="1">
    <location>
        <position position="283"/>
    </location>
    <ligand>
        <name>Mg(2+)</name>
        <dbReference type="ChEBI" id="CHEBI:18420"/>
    </ligand>
</feature>
<feature type="binding site" evidence="1">
    <location>
        <position position="310"/>
    </location>
    <ligand>
        <name>Mg(2+)</name>
        <dbReference type="ChEBI" id="CHEBI:18420"/>
    </ligand>
</feature>
<feature type="binding site" evidence="1">
    <location>
        <position position="335"/>
    </location>
    <ligand>
        <name>(2R)-2-phosphoglycerate</name>
        <dbReference type="ChEBI" id="CHEBI:58289"/>
    </ligand>
</feature>
<feature type="binding site" evidence="1">
    <location>
        <position position="364"/>
    </location>
    <ligand>
        <name>(2R)-2-phosphoglycerate</name>
        <dbReference type="ChEBI" id="CHEBI:58289"/>
    </ligand>
</feature>
<feature type="binding site" evidence="1">
    <location>
        <position position="365"/>
    </location>
    <ligand>
        <name>(2R)-2-phosphoglycerate</name>
        <dbReference type="ChEBI" id="CHEBI:58289"/>
    </ligand>
</feature>
<feature type="binding site" evidence="1">
    <location>
        <position position="386"/>
    </location>
    <ligand>
        <name>(2R)-2-phosphoglycerate</name>
        <dbReference type="ChEBI" id="CHEBI:58289"/>
    </ligand>
</feature>
<protein>
    <recommendedName>
        <fullName evidence="1">Enolase</fullName>
        <ecNumber evidence="1">4.2.1.11</ecNumber>
    </recommendedName>
    <alternativeName>
        <fullName evidence="1">2-phospho-D-glycerate hydro-lyase</fullName>
    </alternativeName>
    <alternativeName>
        <fullName evidence="1">2-phosphoglycerate dehydratase</fullName>
    </alternativeName>
</protein>
<comment type="function">
    <text evidence="1">Catalyzes the reversible conversion of 2-phosphoglycerate (2-PG) into phosphoenolpyruvate (PEP). It is essential for the degradation of carbohydrates via glycolysis.</text>
</comment>
<comment type="catalytic activity">
    <reaction evidence="1">
        <text>(2R)-2-phosphoglycerate = phosphoenolpyruvate + H2O</text>
        <dbReference type="Rhea" id="RHEA:10164"/>
        <dbReference type="ChEBI" id="CHEBI:15377"/>
        <dbReference type="ChEBI" id="CHEBI:58289"/>
        <dbReference type="ChEBI" id="CHEBI:58702"/>
        <dbReference type="EC" id="4.2.1.11"/>
    </reaction>
</comment>
<comment type="cofactor">
    <cofactor evidence="1">
        <name>Mg(2+)</name>
        <dbReference type="ChEBI" id="CHEBI:18420"/>
    </cofactor>
    <text evidence="1">Binds a second Mg(2+) ion via substrate during catalysis.</text>
</comment>
<comment type="pathway">
    <text evidence="1">Carbohydrate degradation; glycolysis; pyruvate from D-glyceraldehyde 3-phosphate: step 4/5.</text>
</comment>
<comment type="subcellular location">
    <subcellularLocation>
        <location evidence="1">Cytoplasm</location>
    </subcellularLocation>
    <subcellularLocation>
        <location evidence="1">Secreted</location>
    </subcellularLocation>
    <subcellularLocation>
        <location evidence="1">Cell surface</location>
    </subcellularLocation>
    <text evidence="1">Fractions of enolase are present in both the cytoplasm and on the cell surface.</text>
</comment>
<comment type="similarity">
    <text evidence="1">Belongs to the enolase family.</text>
</comment>
<dbReference type="EC" id="4.2.1.11" evidence="1"/>
<dbReference type="EMBL" id="AM884176">
    <property type="protein sequence ID" value="CAP04287.1"/>
    <property type="molecule type" value="Genomic_DNA"/>
</dbReference>
<dbReference type="RefSeq" id="WP_009873920.1">
    <property type="nucleotide sequence ID" value="NC_010287.1"/>
</dbReference>
<dbReference type="RefSeq" id="YP_001654920.1">
    <property type="nucleotide sequence ID" value="NC_010287.1"/>
</dbReference>
<dbReference type="SMR" id="B0B8G1"/>
<dbReference type="KEGG" id="ctb:CTL0850"/>
<dbReference type="PATRIC" id="fig|471472.4.peg.911"/>
<dbReference type="HOGENOM" id="CLU_031223_2_1_0"/>
<dbReference type="UniPathway" id="UPA00109">
    <property type="reaction ID" value="UER00187"/>
</dbReference>
<dbReference type="Proteomes" id="UP001154402">
    <property type="component" value="Chromosome"/>
</dbReference>
<dbReference type="GO" id="GO:0009986">
    <property type="term" value="C:cell surface"/>
    <property type="evidence" value="ECO:0007669"/>
    <property type="project" value="UniProtKB-SubCell"/>
</dbReference>
<dbReference type="GO" id="GO:0005576">
    <property type="term" value="C:extracellular region"/>
    <property type="evidence" value="ECO:0007669"/>
    <property type="project" value="UniProtKB-SubCell"/>
</dbReference>
<dbReference type="GO" id="GO:0000015">
    <property type="term" value="C:phosphopyruvate hydratase complex"/>
    <property type="evidence" value="ECO:0007669"/>
    <property type="project" value="InterPro"/>
</dbReference>
<dbReference type="GO" id="GO:0000287">
    <property type="term" value="F:magnesium ion binding"/>
    <property type="evidence" value="ECO:0007669"/>
    <property type="project" value="UniProtKB-UniRule"/>
</dbReference>
<dbReference type="GO" id="GO:0004634">
    <property type="term" value="F:phosphopyruvate hydratase activity"/>
    <property type="evidence" value="ECO:0007669"/>
    <property type="project" value="UniProtKB-UniRule"/>
</dbReference>
<dbReference type="GO" id="GO:0006096">
    <property type="term" value="P:glycolytic process"/>
    <property type="evidence" value="ECO:0007669"/>
    <property type="project" value="UniProtKB-UniRule"/>
</dbReference>
<dbReference type="CDD" id="cd03313">
    <property type="entry name" value="enolase"/>
    <property type="match status" value="1"/>
</dbReference>
<dbReference type="Gene3D" id="3.20.20.120">
    <property type="entry name" value="Enolase-like C-terminal domain"/>
    <property type="match status" value="1"/>
</dbReference>
<dbReference type="Gene3D" id="3.30.390.10">
    <property type="entry name" value="Enolase-like, N-terminal domain"/>
    <property type="match status" value="1"/>
</dbReference>
<dbReference type="HAMAP" id="MF_00318">
    <property type="entry name" value="Enolase"/>
    <property type="match status" value="1"/>
</dbReference>
<dbReference type="InterPro" id="IPR000941">
    <property type="entry name" value="Enolase"/>
</dbReference>
<dbReference type="InterPro" id="IPR036849">
    <property type="entry name" value="Enolase-like_C_sf"/>
</dbReference>
<dbReference type="InterPro" id="IPR029017">
    <property type="entry name" value="Enolase-like_N"/>
</dbReference>
<dbReference type="InterPro" id="IPR020810">
    <property type="entry name" value="Enolase_C"/>
</dbReference>
<dbReference type="InterPro" id="IPR020809">
    <property type="entry name" value="Enolase_CS"/>
</dbReference>
<dbReference type="InterPro" id="IPR020811">
    <property type="entry name" value="Enolase_N"/>
</dbReference>
<dbReference type="NCBIfam" id="TIGR01060">
    <property type="entry name" value="eno"/>
    <property type="match status" value="1"/>
</dbReference>
<dbReference type="PANTHER" id="PTHR11902">
    <property type="entry name" value="ENOLASE"/>
    <property type="match status" value="1"/>
</dbReference>
<dbReference type="PANTHER" id="PTHR11902:SF1">
    <property type="entry name" value="ENOLASE"/>
    <property type="match status" value="1"/>
</dbReference>
<dbReference type="Pfam" id="PF00113">
    <property type="entry name" value="Enolase_C"/>
    <property type="match status" value="1"/>
</dbReference>
<dbReference type="Pfam" id="PF03952">
    <property type="entry name" value="Enolase_N"/>
    <property type="match status" value="1"/>
</dbReference>
<dbReference type="PIRSF" id="PIRSF001400">
    <property type="entry name" value="Enolase"/>
    <property type="match status" value="1"/>
</dbReference>
<dbReference type="PRINTS" id="PR00148">
    <property type="entry name" value="ENOLASE"/>
</dbReference>
<dbReference type="SFLD" id="SFLDS00001">
    <property type="entry name" value="Enolase"/>
    <property type="match status" value="1"/>
</dbReference>
<dbReference type="SFLD" id="SFLDF00002">
    <property type="entry name" value="enolase"/>
    <property type="match status" value="1"/>
</dbReference>
<dbReference type="SMART" id="SM01192">
    <property type="entry name" value="Enolase_C"/>
    <property type="match status" value="1"/>
</dbReference>
<dbReference type="SMART" id="SM01193">
    <property type="entry name" value="Enolase_N"/>
    <property type="match status" value="1"/>
</dbReference>
<dbReference type="SUPFAM" id="SSF51604">
    <property type="entry name" value="Enolase C-terminal domain-like"/>
    <property type="match status" value="1"/>
</dbReference>
<dbReference type="SUPFAM" id="SSF54826">
    <property type="entry name" value="Enolase N-terminal domain-like"/>
    <property type="match status" value="1"/>
</dbReference>
<dbReference type="PROSITE" id="PS00164">
    <property type="entry name" value="ENOLASE"/>
    <property type="match status" value="1"/>
</dbReference>
<reference key="1">
    <citation type="journal article" date="2008" name="Genome Res.">
        <title>Chlamydia trachomatis: genome sequence analysis of lymphogranuloma venereum isolates.</title>
        <authorList>
            <person name="Thomson N.R."/>
            <person name="Holden M.T.G."/>
            <person name="Carder C."/>
            <person name="Lennard N."/>
            <person name="Lockey S.J."/>
            <person name="Marsh P."/>
            <person name="Skipp P."/>
            <person name="O'Connor C.D."/>
            <person name="Goodhead I."/>
            <person name="Norbertzcak H."/>
            <person name="Harris B."/>
            <person name="Ormond D."/>
            <person name="Rance R."/>
            <person name="Quail M.A."/>
            <person name="Parkhill J."/>
            <person name="Stephens R.S."/>
            <person name="Clarke I.N."/>
        </authorList>
    </citation>
    <scope>NUCLEOTIDE SEQUENCE [LARGE SCALE GENOMIC DNA]</scope>
    <source>
        <strain>ATCC VR-902B / DSM 19102 / 434/Bu</strain>
    </source>
</reference>
<proteinExistence type="inferred from homology"/>
<organism>
    <name type="scientific">Chlamydia trachomatis serovar L2 (strain ATCC VR-902B / DSM 19102 / 434/Bu)</name>
    <dbReference type="NCBI Taxonomy" id="471472"/>
    <lineage>
        <taxon>Bacteria</taxon>
        <taxon>Pseudomonadati</taxon>
        <taxon>Chlamydiota</taxon>
        <taxon>Chlamydiia</taxon>
        <taxon>Chlamydiales</taxon>
        <taxon>Chlamydiaceae</taxon>
        <taxon>Chlamydia/Chlamydophila group</taxon>
        <taxon>Chlamydia</taxon>
    </lineage>
</organism>
<sequence length="424" mass="45434">MFDVVISDIEAREILDSRGYPTLCVKVITNTGTFGEACVPSGASTGIKEALELRDKDPKRYQGKGVLQAISNVEKVLVPALQGFSVFDQITADAIMIDADGTPNKEKLGANAILGVSLALAKAAANTLQRPLYRYLGGSFSHVLPCPMMNLINGGMHATNGLQFQEFMIRPISAPSLKEAVRMGAEVFNALKKILQNRQLATGVGDEGGFAPNLASNAEALDLLLTAIETAGFTPREDISLALDCAASSFYNTQDKTYDGKSYADQVGILAELCEHYPIDSIEDGLAEEDFEGWKLLSETLGDRVQLVGDDLFVTNSALIAEGIAQGLANAVLIKPNQIGTLTETAEAIRLATIQGYATILSHRSGETEDTTIADLAVAFNTGQIKTGSLSRSERIAKYNRLMAIEEEMGPEALFQDSNPFSKA</sequence>